<comment type="function">
    <text evidence="1">Assembles around the rod to form the L-ring and probably protects the motor/basal body from shearing forces during rotation.</text>
</comment>
<comment type="subunit">
    <text evidence="1">The basal body constitutes a major portion of the flagellar organelle and consists of four rings (L,P,S, and M) mounted on a central rod.</text>
</comment>
<comment type="subcellular location">
    <subcellularLocation>
        <location evidence="1">Cell outer membrane</location>
        <topology evidence="1">Lipid-anchor</topology>
    </subcellularLocation>
    <subcellularLocation>
        <location evidence="1">Bacterial flagellum basal body</location>
    </subcellularLocation>
</comment>
<comment type="similarity">
    <text evidence="1">Belongs to the FlgH family.</text>
</comment>
<feature type="signal peptide" evidence="1">
    <location>
        <begin position="1"/>
        <end position="21"/>
    </location>
</feature>
<feature type="chain" id="PRO_0000236836" description="Flagellar L-ring protein">
    <location>
        <begin position="22"/>
        <end position="232"/>
    </location>
</feature>
<feature type="lipid moiety-binding region" description="N-palmitoyl cysteine" evidence="1">
    <location>
        <position position="22"/>
    </location>
</feature>
<feature type="lipid moiety-binding region" description="S-diacylglycerol cysteine" evidence="1">
    <location>
        <position position="22"/>
    </location>
</feature>
<accession>Q3Z338</accession>
<proteinExistence type="inferred from homology"/>
<name>FLGH_SHISS</name>
<dbReference type="EMBL" id="CP000038">
    <property type="protein sequence ID" value="AAZ87824.1"/>
    <property type="molecule type" value="Genomic_DNA"/>
</dbReference>
<dbReference type="RefSeq" id="WP_001295442.1">
    <property type="nucleotide sequence ID" value="NC_007384.1"/>
</dbReference>
<dbReference type="SMR" id="Q3Z338"/>
<dbReference type="GeneID" id="93776328"/>
<dbReference type="KEGG" id="ssn:SSON_1099"/>
<dbReference type="HOGENOM" id="CLU_069313_0_0_6"/>
<dbReference type="Proteomes" id="UP000002529">
    <property type="component" value="Chromosome"/>
</dbReference>
<dbReference type="GO" id="GO:0009427">
    <property type="term" value="C:bacterial-type flagellum basal body, distal rod, L ring"/>
    <property type="evidence" value="ECO:0007669"/>
    <property type="project" value="InterPro"/>
</dbReference>
<dbReference type="GO" id="GO:0009279">
    <property type="term" value="C:cell outer membrane"/>
    <property type="evidence" value="ECO:0007669"/>
    <property type="project" value="UniProtKB-SubCell"/>
</dbReference>
<dbReference type="GO" id="GO:0003774">
    <property type="term" value="F:cytoskeletal motor activity"/>
    <property type="evidence" value="ECO:0007669"/>
    <property type="project" value="InterPro"/>
</dbReference>
<dbReference type="GO" id="GO:0071973">
    <property type="term" value="P:bacterial-type flagellum-dependent cell motility"/>
    <property type="evidence" value="ECO:0007669"/>
    <property type="project" value="InterPro"/>
</dbReference>
<dbReference type="HAMAP" id="MF_00415">
    <property type="entry name" value="FlgH"/>
    <property type="match status" value="1"/>
</dbReference>
<dbReference type="InterPro" id="IPR000527">
    <property type="entry name" value="Flag_Lring"/>
</dbReference>
<dbReference type="NCBIfam" id="NF001301">
    <property type="entry name" value="PRK00249.1-1"/>
    <property type="match status" value="1"/>
</dbReference>
<dbReference type="PANTHER" id="PTHR34933">
    <property type="entry name" value="FLAGELLAR L-RING PROTEIN"/>
    <property type="match status" value="1"/>
</dbReference>
<dbReference type="PANTHER" id="PTHR34933:SF3">
    <property type="entry name" value="FLAGELLAR L-RING PROTEIN"/>
    <property type="match status" value="1"/>
</dbReference>
<dbReference type="Pfam" id="PF02107">
    <property type="entry name" value="FlgH"/>
    <property type="match status" value="1"/>
</dbReference>
<dbReference type="PRINTS" id="PR01008">
    <property type="entry name" value="FLGLRINGFLGH"/>
</dbReference>
<dbReference type="PROSITE" id="PS51257">
    <property type="entry name" value="PROKAR_LIPOPROTEIN"/>
    <property type="match status" value="1"/>
</dbReference>
<reference key="1">
    <citation type="journal article" date="2005" name="Nucleic Acids Res.">
        <title>Genome dynamics and diversity of Shigella species, the etiologic agents of bacillary dysentery.</title>
        <authorList>
            <person name="Yang F."/>
            <person name="Yang J."/>
            <person name="Zhang X."/>
            <person name="Chen L."/>
            <person name="Jiang Y."/>
            <person name="Yan Y."/>
            <person name="Tang X."/>
            <person name="Wang J."/>
            <person name="Xiong Z."/>
            <person name="Dong J."/>
            <person name="Xue Y."/>
            <person name="Zhu Y."/>
            <person name="Xu X."/>
            <person name="Sun L."/>
            <person name="Chen S."/>
            <person name="Nie H."/>
            <person name="Peng J."/>
            <person name="Xu J."/>
            <person name="Wang Y."/>
            <person name="Yuan Z."/>
            <person name="Wen Y."/>
            <person name="Yao Z."/>
            <person name="Shen Y."/>
            <person name="Qiang B."/>
            <person name="Hou Y."/>
            <person name="Yu J."/>
            <person name="Jin Q."/>
        </authorList>
    </citation>
    <scope>NUCLEOTIDE SEQUENCE [LARGE SCALE GENOMIC DNA]</scope>
    <source>
        <strain>Ss046</strain>
    </source>
</reference>
<evidence type="ECO:0000255" key="1">
    <source>
        <dbReference type="HAMAP-Rule" id="MF_00415"/>
    </source>
</evidence>
<organism>
    <name type="scientific">Shigella sonnei (strain Ss046)</name>
    <dbReference type="NCBI Taxonomy" id="300269"/>
    <lineage>
        <taxon>Bacteria</taxon>
        <taxon>Pseudomonadati</taxon>
        <taxon>Pseudomonadota</taxon>
        <taxon>Gammaproteobacteria</taxon>
        <taxon>Enterobacterales</taxon>
        <taxon>Enterobacteriaceae</taxon>
        <taxon>Shigella</taxon>
    </lineage>
</organism>
<sequence length="232" mass="24615">MQKNAAHTYAISSLLVLSLTGCAWIPSTPLVQGATSAQPVPGPTPVANGSIFQSAQPINYGYQPLFEDRRPRNIGDTLTIVLQENVSASKSSSANASRDGKTNFGFDTVPRYLQGLFGNARADVEASGGNTFNGKGGANASNTFSGTLTVTVDQVLVNGNLHVVGEKQIAINQGTEFIRFSGVVNPRTISGSNTVPSTQVADARIEYVGNGYINEAQNMGWLQRFFLNLSPM</sequence>
<protein>
    <recommendedName>
        <fullName evidence="1">Flagellar L-ring protein</fullName>
    </recommendedName>
    <alternativeName>
        <fullName evidence="1">Basal body L-ring protein</fullName>
    </alternativeName>
</protein>
<gene>
    <name evidence="1" type="primary">flgH</name>
    <name type="ordered locus">SSON_1099</name>
</gene>
<keyword id="KW-0975">Bacterial flagellum</keyword>
<keyword id="KW-0998">Cell outer membrane</keyword>
<keyword id="KW-0449">Lipoprotein</keyword>
<keyword id="KW-0472">Membrane</keyword>
<keyword id="KW-0564">Palmitate</keyword>
<keyword id="KW-1185">Reference proteome</keyword>
<keyword id="KW-0732">Signal</keyword>